<keyword id="KW-0249">Electron transport</keyword>
<keyword id="KW-0349">Heme</keyword>
<keyword id="KW-0408">Iron</keyword>
<keyword id="KW-0472">Membrane</keyword>
<keyword id="KW-0479">Metal-binding</keyword>
<keyword id="KW-0496">Mitochondrion</keyword>
<keyword id="KW-0999">Mitochondrion inner membrane</keyword>
<keyword id="KW-0679">Respiratory chain</keyword>
<keyword id="KW-0812">Transmembrane</keyword>
<keyword id="KW-1133">Transmembrane helix</keyword>
<keyword id="KW-0813">Transport</keyword>
<keyword id="KW-0830">Ubiquinone</keyword>
<feature type="chain" id="PRO_0000254696" description="Cytochrome b">
    <location>
        <begin position="1"/>
        <end position="379"/>
    </location>
</feature>
<feature type="transmembrane region" description="Helical" evidence="2">
    <location>
        <begin position="33"/>
        <end position="53"/>
    </location>
</feature>
<feature type="transmembrane region" description="Helical" evidence="2">
    <location>
        <begin position="77"/>
        <end position="98"/>
    </location>
</feature>
<feature type="transmembrane region" description="Helical" evidence="2">
    <location>
        <begin position="113"/>
        <end position="133"/>
    </location>
</feature>
<feature type="transmembrane region" description="Helical" evidence="2">
    <location>
        <begin position="178"/>
        <end position="198"/>
    </location>
</feature>
<feature type="transmembrane region" description="Helical" evidence="2">
    <location>
        <begin position="226"/>
        <end position="246"/>
    </location>
</feature>
<feature type="transmembrane region" description="Helical" evidence="2">
    <location>
        <begin position="288"/>
        <end position="308"/>
    </location>
</feature>
<feature type="transmembrane region" description="Helical" evidence="2">
    <location>
        <begin position="320"/>
        <end position="340"/>
    </location>
</feature>
<feature type="transmembrane region" description="Helical" evidence="2">
    <location>
        <begin position="347"/>
        <end position="367"/>
    </location>
</feature>
<feature type="binding site" description="axial binding residue" evidence="2">
    <location>
        <position position="83"/>
    </location>
    <ligand>
        <name>heme b</name>
        <dbReference type="ChEBI" id="CHEBI:60344"/>
        <label>b562</label>
    </ligand>
    <ligandPart>
        <name>Fe</name>
        <dbReference type="ChEBI" id="CHEBI:18248"/>
    </ligandPart>
</feature>
<feature type="binding site" description="axial binding residue" evidence="2">
    <location>
        <position position="97"/>
    </location>
    <ligand>
        <name>heme b</name>
        <dbReference type="ChEBI" id="CHEBI:60344"/>
        <label>b566</label>
    </ligand>
    <ligandPart>
        <name>Fe</name>
        <dbReference type="ChEBI" id="CHEBI:18248"/>
    </ligandPart>
</feature>
<feature type="binding site" description="axial binding residue" evidence="2">
    <location>
        <position position="182"/>
    </location>
    <ligand>
        <name>heme b</name>
        <dbReference type="ChEBI" id="CHEBI:60344"/>
        <label>b562</label>
    </ligand>
    <ligandPart>
        <name>Fe</name>
        <dbReference type="ChEBI" id="CHEBI:18248"/>
    </ligandPart>
</feature>
<feature type="binding site" description="axial binding residue" evidence="2">
    <location>
        <position position="196"/>
    </location>
    <ligand>
        <name>heme b</name>
        <dbReference type="ChEBI" id="CHEBI:60344"/>
        <label>b566</label>
    </ligand>
    <ligandPart>
        <name>Fe</name>
        <dbReference type="ChEBI" id="CHEBI:18248"/>
    </ligandPart>
</feature>
<feature type="binding site" evidence="2">
    <location>
        <position position="201"/>
    </location>
    <ligand>
        <name>a ubiquinone</name>
        <dbReference type="ChEBI" id="CHEBI:16389"/>
    </ligand>
</feature>
<organism>
    <name type="scientific">Hemiechinus auritus</name>
    <name type="common">Long-eared hedgehog</name>
    <dbReference type="NCBI Taxonomy" id="217708"/>
    <lineage>
        <taxon>Eukaryota</taxon>
        <taxon>Metazoa</taxon>
        <taxon>Chordata</taxon>
        <taxon>Craniata</taxon>
        <taxon>Vertebrata</taxon>
        <taxon>Euteleostomi</taxon>
        <taxon>Mammalia</taxon>
        <taxon>Eutheria</taxon>
        <taxon>Laurasiatheria</taxon>
        <taxon>Eulipotyphla</taxon>
        <taxon>Erinaceidae</taxon>
        <taxon>Erinaceinae</taxon>
        <taxon>Hemiechinus</taxon>
    </lineage>
</organism>
<geneLocation type="mitochondrion"/>
<protein>
    <recommendedName>
        <fullName>Cytochrome b</fullName>
    </recommendedName>
    <alternativeName>
        <fullName>Complex III subunit 3</fullName>
    </alternativeName>
    <alternativeName>
        <fullName>Complex III subunit III</fullName>
    </alternativeName>
    <alternativeName>
        <fullName>Cytochrome b-c1 complex subunit 3</fullName>
    </alternativeName>
    <alternativeName>
        <fullName>Ubiquinol-cytochrome-c reductase complex cytochrome b subunit</fullName>
    </alternativeName>
</protein>
<comment type="function">
    <text evidence="2">Component of the ubiquinol-cytochrome c reductase complex (complex III or cytochrome b-c1 complex) that is part of the mitochondrial respiratory chain. The b-c1 complex mediates electron transfer from ubiquinol to cytochrome c. Contributes to the generation of a proton gradient across the mitochondrial membrane that is then used for ATP synthesis.</text>
</comment>
<comment type="cofactor">
    <cofactor evidence="2">
        <name>heme b</name>
        <dbReference type="ChEBI" id="CHEBI:60344"/>
    </cofactor>
    <text evidence="2">Binds 2 heme b groups non-covalently.</text>
</comment>
<comment type="subunit">
    <text evidence="2">The cytochrome bc1 complex contains 11 subunits: 3 respiratory subunits (MT-CYB, CYC1 and UQCRFS1), 2 core proteins (UQCRC1 and UQCRC2) and 6 low-molecular weight proteins (UQCRH/QCR6, UQCRB/QCR7, UQCRQ/QCR8, UQCR10/QCR9, UQCR11/QCR10 and a cleavage product of UQCRFS1). This cytochrome bc1 complex then forms a dimer.</text>
</comment>
<comment type="subcellular location">
    <subcellularLocation>
        <location evidence="2">Mitochondrion inner membrane</location>
        <topology evidence="2">Multi-pass membrane protein</topology>
    </subcellularLocation>
</comment>
<comment type="miscellaneous">
    <text evidence="1">Heme 1 (or BL or b562) is low-potential and absorbs at about 562 nm, and heme 2 (or BH or b566) is high-potential and absorbs at about 566 nm.</text>
</comment>
<comment type="similarity">
    <text evidence="3 4">Belongs to the cytochrome b family.</text>
</comment>
<comment type="caution">
    <text evidence="2">The full-length protein contains only eight transmembrane helices, not nine as predicted by bioinformatics tools.</text>
</comment>
<sequence length="379" mass="43254">MLNIRKNHSLMKIINNSFIDLPTPSNISSWWNFGSLLGLCLITQIITGLFLAMHYTSDTLTAFSSVTHICRDVNYGWLIRYLHANGASMFFMCLFLHIGRGIYYGSYLFKETWNMGIILLITTMATAFMGYVLPWGQMSFWGATVITNLLSAIPYIGTDLVQWIWGSFSVDKATLTRFFAFHFILPFMIVALTMVHLLFLHETGSNNPTGIISESDKIPFHPYYTMKDILGMISLLLILMTLTLFSPDLLGDPDNYTPANPLNTPPHIKPEWYFLFAYAILRSIPNKLGGVLALLMSILILFFMPLLHTSKQRSMIFRPLSQCTFWLLTSDLLILTWIGSQPVEDPYIIIGQLASILYFLIILFLMPVMGLIENSMFKW</sequence>
<name>CYB_HEMAU</name>
<reference key="1">
    <citation type="journal article" date="2003" name="Mol. Phylogenet. Evol.">
        <title>Mitochondrial phylogeny of hedgehogs and monophyly of Eulipotyphla.</title>
        <authorList>
            <person name="Nikaido M."/>
            <person name="Cao Y."/>
            <person name="Harada M."/>
            <person name="Okada N."/>
            <person name="Hasegawa M."/>
        </authorList>
    </citation>
    <scope>NUCLEOTIDE SEQUENCE [GENOMIC DNA]</scope>
</reference>
<proteinExistence type="inferred from homology"/>
<dbReference type="EMBL" id="AB099481">
    <property type="protein sequence ID" value="BAC78860.1"/>
    <property type="molecule type" value="Genomic_DNA"/>
</dbReference>
<dbReference type="RefSeq" id="NP_871760.1">
    <property type="nucleotide sequence ID" value="NC_005033.1"/>
</dbReference>
<dbReference type="SMR" id="Q7Y8F6"/>
<dbReference type="GeneID" id="1482892"/>
<dbReference type="CTD" id="4519"/>
<dbReference type="GO" id="GO:0005743">
    <property type="term" value="C:mitochondrial inner membrane"/>
    <property type="evidence" value="ECO:0007669"/>
    <property type="project" value="UniProtKB-SubCell"/>
</dbReference>
<dbReference type="GO" id="GO:0045275">
    <property type="term" value="C:respiratory chain complex III"/>
    <property type="evidence" value="ECO:0007669"/>
    <property type="project" value="InterPro"/>
</dbReference>
<dbReference type="GO" id="GO:0046872">
    <property type="term" value="F:metal ion binding"/>
    <property type="evidence" value="ECO:0007669"/>
    <property type="project" value="UniProtKB-KW"/>
</dbReference>
<dbReference type="GO" id="GO:0008121">
    <property type="term" value="F:ubiquinol-cytochrome-c reductase activity"/>
    <property type="evidence" value="ECO:0007669"/>
    <property type="project" value="InterPro"/>
</dbReference>
<dbReference type="GO" id="GO:0006122">
    <property type="term" value="P:mitochondrial electron transport, ubiquinol to cytochrome c"/>
    <property type="evidence" value="ECO:0007669"/>
    <property type="project" value="TreeGrafter"/>
</dbReference>
<dbReference type="CDD" id="cd00290">
    <property type="entry name" value="cytochrome_b_C"/>
    <property type="match status" value="1"/>
</dbReference>
<dbReference type="CDD" id="cd00284">
    <property type="entry name" value="Cytochrome_b_N"/>
    <property type="match status" value="1"/>
</dbReference>
<dbReference type="FunFam" id="1.20.810.10:FF:000002">
    <property type="entry name" value="Cytochrome b"/>
    <property type="match status" value="1"/>
</dbReference>
<dbReference type="Gene3D" id="1.20.810.10">
    <property type="entry name" value="Cytochrome Bc1 Complex, Chain C"/>
    <property type="match status" value="1"/>
</dbReference>
<dbReference type="InterPro" id="IPR005798">
    <property type="entry name" value="Cyt_b/b6_C"/>
</dbReference>
<dbReference type="InterPro" id="IPR036150">
    <property type="entry name" value="Cyt_b/b6_C_sf"/>
</dbReference>
<dbReference type="InterPro" id="IPR005797">
    <property type="entry name" value="Cyt_b/b6_N"/>
</dbReference>
<dbReference type="InterPro" id="IPR027387">
    <property type="entry name" value="Cytb/b6-like_sf"/>
</dbReference>
<dbReference type="InterPro" id="IPR030689">
    <property type="entry name" value="Cytochrome_b"/>
</dbReference>
<dbReference type="InterPro" id="IPR048260">
    <property type="entry name" value="Cytochrome_b_C_euk/bac"/>
</dbReference>
<dbReference type="InterPro" id="IPR048259">
    <property type="entry name" value="Cytochrome_b_N_euk/bac"/>
</dbReference>
<dbReference type="InterPro" id="IPR016174">
    <property type="entry name" value="Di-haem_cyt_TM"/>
</dbReference>
<dbReference type="PANTHER" id="PTHR19271">
    <property type="entry name" value="CYTOCHROME B"/>
    <property type="match status" value="1"/>
</dbReference>
<dbReference type="PANTHER" id="PTHR19271:SF16">
    <property type="entry name" value="CYTOCHROME B"/>
    <property type="match status" value="1"/>
</dbReference>
<dbReference type="Pfam" id="PF00032">
    <property type="entry name" value="Cytochrom_B_C"/>
    <property type="match status" value="1"/>
</dbReference>
<dbReference type="Pfam" id="PF00033">
    <property type="entry name" value="Cytochrome_B"/>
    <property type="match status" value="1"/>
</dbReference>
<dbReference type="PIRSF" id="PIRSF038885">
    <property type="entry name" value="COB"/>
    <property type="match status" value="1"/>
</dbReference>
<dbReference type="SUPFAM" id="SSF81648">
    <property type="entry name" value="a domain/subunit of cytochrome bc1 complex (Ubiquinol-cytochrome c reductase)"/>
    <property type="match status" value="1"/>
</dbReference>
<dbReference type="SUPFAM" id="SSF81342">
    <property type="entry name" value="Transmembrane di-heme cytochromes"/>
    <property type="match status" value="1"/>
</dbReference>
<dbReference type="PROSITE" id="PS51003">
    <property type="entry name" value="CYTB_CTER"/>
    <property type="match status" value="1"/>
</dbReference>
<dbReference type="PROSITE" id="PS51002">
    <property type="entry name" value="CYTB_NTER"/>
    <property type="match status" value="1"/>
</dbReference>
<accession>Q7Y8F6</accession>
<evidence type="ECO:0000250" key="1"/>
<evidence type="ECO:0000250" key="2">
    <source>
        <dbReference type="UniProtKB" id="P00157"/>
    </source>
</evidence>
<evidence type="ECO:0000255" key="3">
    <source>
        <dbReference type="PROSITE-ProRule" id="PRU00967"/>
    </source>
</evidence>
<evidence type="ECO:0000255" key="4">
    <source>
        <dbReference type="PROSITE-ProRule" id="PRU00968"/>
    </source>
</evidence>
<gene>
    <name type="primary">MT-CYB</name>
    <name type="synonym">COB</name>
    <name type="synonym">CYTB</name>
    <name type="synonym">MTCYB</name>
</gene>